<comment type="function">
    <text evidence="1">Catalyzes the ATP-dependent amination of UTP to CTP with either L-glutamine or ammonia as the source of nitrogen. Regulates intracellular CTP levels through interactions with the four ribonucleotide triphosphates.</text>
</comment>
<comment type="catalytic activity">
    <reaction evidence="1">
        <text>UTP + L-glutamine + ATP + H2O = CTP + L-glutamate + ADP + phosphate + 2 H(+)</text>
        <dbReference type="Rhea" id="RHEA:26426"/>
        <dbReference type="ChEBI" id="CHEBI:15377"/>
        <dbReference type="ChEBI" id="CHEBI:15378"/>
        <dbReference type="ChEBI" id="CHEBI:29985"/>
        <dbReference type="ChEBI" id="CHEBI:30616"/>
        <dbReference type="ChEBI" id="CHEBI:37563"/>
        <dbReference type="ChEBI" id="CHEBI:43474"/>
        <dbReference type="ChEBI" id="CHEBI:46398"/>
        <dbReference type="ChEBI" id="CHEBI:58359"/>
        <dbReference type="ChEBI" id="CHEBI:456216"/>
        <dbReference type="EC" id="6.3.4.2"/>
    </reaction>
</comment>
<comment type="catalytic activity">
    <reaction evidence="1">
        <text>L-glutamine + H2O = L-glutamate + NH4(+)</text>
        <dbReference type="Rhea" id="RHEA:15889"/>
        <dbReference type="ChEBI" id="CHEBI:15377"/>
        <dbReference type="ChEBI" id="CHEBI:28938"/>
        <dbReference type="ChEBI" id="CHEBI:29985"/>
        <dbReference type="ChEBI" id="CHEBI:58359"/>
    </reaction>
</comment>
<comment type="catalytic activity">
    <reaction evidence="1">
        <text>UTP + NH4(+) + ATP = CTP + ADP + phosphate + 2 H(+)</text>
        <dbReference type="Rhea" id="RHEA:16597"/>
        <dbReference type="ChEBI" id="CHEBI:15378"/>
        <dbReference type="ChEBI" id="CHEBI:28938"/>
        <dbReference type="ChEBI" id="CHEBI:30616"/>
        <dbReference type="ChEBI" id="CHEBI:37563"/>
        <dbReference type="ChEBI" id="CHEBI:43474"/>
        <dbReference type="ChEBI" id="CHEBI:46398"/>
        <dbReference type="ChEBI" id="CHEBI:456216"/>
    </reaction>
</comment>
<comment type="activity regulation">
    <text evidence="1">Allosterically activated by GTP, when glutamine is the substrate; GTP has no effect on the reaction when ammonia is the substrate. The allosteric effector GTP functions by stabilizing the protein conformation that binds the tetrahedral intermediate(s) formed during glutamine hydrolysis. Inhibited by the product CTP, via allosteric rather than competitive inhibition.</text>
</comment>
<comment type="pathway">
    <text evidence="1">Pyrimidine metabolism; CTP biosynthesis via de novo pathway; CTP from UDP: step 2/2.</text>
</comment>
<comment type="subunit">
    <text evidence="1">Homotetramer.</text>
</comment>
<comment type="miscellaneous">
    <text evidence="1">CTPSs have evolved a hybrid strategy for distinguishing between UTP and CTP. The overlapping regions of the product feedback inhibitory and substrate sites recognize a common feature in both compounds, the triphosphate moiety. To differentiate isosteric substrate and product pyrimidine rings, an additional pocket far from the expected kinase/ligase catalytic site, specifically recognizes the cytosine and ribose portions of the product inhibitor.</text>
</comment>
<comment type="similarity">
    <text evidence="1">Belongs to the CTP synthase family.</text>
</comment>
<sequence>MTPLIFVTGGVVSSLGKGIAAASLASILEARGLKVTMMKLDPYINVDPGTMSPFQHGEVYVTDDGAETDLDLGHYERYVRTRLSRKNSVTTGRIYENVIRKERRGDYLGATVQVIPHITDEIRRCIDEATAGFDVALIEIGGTVGDIESLPFLEAIRQVRTERGAEKAMFMHLTLVPYIAAAGELKTKPTQHSVKELRSIGIQPDVLLCRSEQAVPDSERRKIALFTNVSERAVISCPDIDVLYGMPLELLRQGLDELVIDQFKLRDKVAAADLSEWAAVVDAVKHPLDEVNIAVVGKYVDHQDAYKSVAEALRHGGLRQRTKVNLKWLEAQDLEGSDMSALQDIDGILVPGGFGDRGFEGKVQTSKFAREQKVPYFGICYGMQAAVVDYARHVADLDAANSTENDRQSPHPVIGLITEWRTATGEVEKRDEKSDLGGTMRLGLQEQRLKPGTLAREVYGKDVVAERHRHRYEFNNRYRTQLEDAGLVISGKSMDDTLVEVVELPRDTHPWFLACQAHPEFLSTPRDGHPLFIGFVRAAREKKAGGKLLKEARA</sequence>
<organism>
    <name type="scientific">Xanthomonas axonopodis pv. citri (strain 306)</name>
    <dbReference type="NCBI Taxonomy" id="190486"/>
    <lineage>
        <taxon>Bacteria</taxon>
        <taxon>Pseudomonadati</taxon>
        <taxon>Pseudomonadota</taxon>
        <taxon>Gammaproteobacteria</taxon>
        <taxon>Lysobacterales</taxon>
        <taxon>Lysobacteraceae</taxon>
        <taxon>Xanthomonas</taxon>
    </lineage>
</organism>
<evidence type="ECO:0000255" key="1">
    <source>
        <dbReference type="HAMAP-Rule" id="MF_01227"/>
    </source>
</evidence>
<accession>Q8PLS3</accession>
<reference key="1">
    <citation type="journal article" date="2002" name="Nature">
        <title>Comparison of the genomes of two Xanthomonas pathogens with differing host specificities.</title>
        <authorList>
            <person name="da Silva A.C.R."/>
            <person name="Ferro J.A."/>
            <person name="Reinach F.C."/>
            <person name="Farah C.S."/>
            <person name="Furlan L.R."/>
            <person name="Quaggio R.B."/>
            <person name="Monteiro-Vitorello C.B."/>
            <person name="Van Sluys M.A."/>
            <person name="Almeida N.F. Jr."/>
            <person name="Alves L.M.C."/>
            <person name="do Amaral A.M."/>
            <person name="Bertolini M.C."/>
            <person name="Camargo L.E.A."/>
            <person name="Camarotte G."/>
            <person name="Cannavan F."/>
            <person name="Cardozo J."/>
            <person name="Chambergo F."/>
            <person name="Ciapina L.P."/>
            <person name="Cicarelli R.M.B."/>
            <person name="Coutinho L.L."/>
            <person name="Cursino-Santos J.R."/>
            <person name="El-Dorry H."/>
            <person name="Faria J.B."/>
            <person name="Ferreira A.J.S."/>
            <person name="Ferreira R.C.C."/>
            <person name="Ferro M.I.T."/>
            <person name="Formighieri E.F."/>
            <person name="Franco M.C."/>
            <person name="Greggio C.C."/>
            <person name="Gruber A."/>
            <person name="Katsuyama A.M."/>
            <person name="Kishi L.T."/>
            <person name="Leite R.P."/>
            <person name="Lemos E.G.M."/>
            <person name="Lemos M.V.F."/>
            <person name="Locali E.C."/>
            <person name="Machado M.A."/>
            <person name="Madeira A.M.B.N."/>
            <person name="Martinez-Rossi N.M."/>
            <person name="Martins E.C."/>
            <person name="Meidanis J."/>
            <person name="Menck C.F.M."/>
            <person name="Miyaki C.Y."/>
            <person name="Moon D.H."/>
            <person name="Moreira L.M."/>
            <person name="Novo M.T.M."/>
            <person name="Okura V.K."/>
            <person name="Oliveira M.C."/>
            <person name="Oliveira V.R."/>
            <person name="Pereira H.A."/>
            <person name="Rossi A."/>
            <person name="Sena J.A.D."/>
            <person name="Silva C."/>
            <person name="de Souza R.F."/>
            <person name="Spinola L.A.F."/>
            <person name="Takita M.A."/>
            <person name="Tamura R.E."/>
            <person name="Teixeira E.C."/>
            <person name="Tezza R.I.D."/>
            <person name="Trindade dos Santos M."/>
            <person name="Truffi D."/>
            <person name="Tsai S.M."/>
            <person name="White F.F."/>
            <person name="Setubal J.C."/>
            <person name="Kitajima J.P."/>
        </authorList>
    </citation>
    <scope>NUCLEOTIDE SEQUENCE [LARGE SCALE GENOMIC DNA]</scope>
    <source>
        <strain>306</strain>
    </source>
</reference>
<proteinExistence type="inferred from homology"/>
<feature type="chain" id="PRO_0000138251" description="CTP synthase">
    <location>
        <begin position="1"/>
        <end position="554"/>
    </location>
</feature>
<feature type="domain" description="Glutamine amidotransferase type-1" evidence="1">
    <location>
        <begin position="292"/>
        <end position="545"/>
    </location>
</feature>
<feature type="region of interest" description="Amidoligase domain" evidence="1">
    <location>
        <begin position="1"/>
        <end position="265"/>
    </location>
</feature>
<feature type="active site" description="Nucleophile; for glutamine hydrolysis" evidence="1">
    <location>
        <position position="380"/>
    </location>
</feature>
<feature type="active site" evidence="1">
    <location>
        <position position="518"/>
    </location>
</feature>
<feature type="active site" evidence="1">
    <location>
        <position position="520"/>
    </location>
</feature>
<feature type="binding site" evidence="1">
    <location>
        <position position="13"/>
    </location>
    <ligand>
        <name>CTP</name>
        <dbReference type="ChEBI" id="CHEBI:37563"/>
        <note>allosteric inhibitor</note>
    </ligand>
</feature>
<feature type="binding site" evidence="1">
    <location>
        <position position="13"/>
    </location>
    <ligand>
        <name>UTP</name>
        <dbReference type="ChEBI" id="CHEBI:46398"/>
    </ligand>
</feature>
<feature type="binding site" evidence="1">
    <location>
        <begin position="14"/>
        <end position="19"/>
    </location>
    <ligand>
        <name>ATP</name>
        <dbReference type="ChEBI" id="CHEBI:30616"/>
    </ligand>
</feature>
<feature type="binding site" evidence="1">
    <location>
        <position position="71"/>
    </location>
    <ligand>
        <name>ATP</name>
        <dbReference type="ChEBI" id="CHEBI:30616"/>
    </ligand>
</feature>
<feature type="binding site" evidence="1">
    <location>
        <position position="71"/>
    </location>
    <ligand>
        <name>Mg(2+)</name>
        <dbReference type="ChEBI" id="CHEBI:18420"/>
    </ligand>
</feature>
<feature type="binding site" evidence="1">
    <location>
        <position position="139"/>
    </location>
    <ligand>
        <name>Mg(2+)</name>
        <dbReference type="ChEBI" id="CHEBI:18420"/>
    </ligand>
</feature>
<feature type="binding site" evidence="1">
    <location>
        <begin position="146"/>
        <end position="148"/>
    </location>
    <ligand>
        <name>CTP</name>
        <dbReference type="ChEBI" id="CHEBI:37563"/>
        <note>allosteric inhibitor</note>
    </ligand>
</feature>
<feature type="binding site" evidence="1">
    <location>
        <begin position="186"/>
        <end position="191"/>
    </location>
    <ligand>
        <name>CTP</name>
        <dbReference type="ChEBI" id="CHEBI:37563"/>
        <note>allosteric inhibitor</note>
    </ligand>
</feature>
<feature type="binding site" evidence="1">
    <location>
        <begin position="186"/>
        <end position="191"/>
    </location>
    <ligand>
        <name>UTP</name>
        <dbReference type="ChEBI" id="CHEBI:46398"/>
    </ligand>
</feature>
<feature type="binding site" evidence="1">
    <location>
        <position position="222"/>
    </location>
    <ligand>
        <name>CTP</name>
        <dbReference type="ChEBI" id="CHEBI:37563"/>
        <note>allosteric inhibitor</note>
    </ligand>
</feature>
<feature type="binding site" evidence="1">
    <location>
        <position position="222"/>
    </location>
    <ligand>
        <name>UTP</name>
        <dbReference type="ChEBI" id="CHEBI:46398"/>
    </ligand>
</feature>
<feature type="binding site" evidence="1">
    <location>
        <position position="353"/>
    </location>
    <ligand>
        <name>L-glutamine</name>
        <dbReference type="ChEBI" id="CHEBI:58359"/>
    </ligand>
</feature>
<feature type="binding site" evidence="1">
    <location>
        <begin position="381"/>
        <end position="384"/>
    </location>
    <ligand>
        <name>L-glutamine</name>
        <dbReference type="ChEBI" id="CHEBI:58359"/>
    </ligand>
</feature>
<feature type="binding site" evidence="1">
    <location>
        <position position="404"/>
    </location>
    <ligand>
        <name>L-glutamine</name>
        <dbReference type="ChEBI" id="CHEBI:58359"/>
    </ligand>
</feature>
<feature type="binding site" evidence="1">
    <location>
        <position position="471"/>
    </location>
    <ligand>
        <name>L-glutamine</name>
        <dbReference type="ChEBI" id="CHEBI:58359"/>
    </ligand>
</feature>
<name>PYRG_XANAC</name>
<keyword id="KW-0067">ATP-binding</keyword>
<keyword id="KW-0315">Glutamine amidotransferase</keyword>
<keyword id="KW-0436">Ligase</keyword>
<keyword id="KW-0460">Magnesium</keyword>
<keyword id="KW-0479">Metal-binding</keyword>
<keyword id="KW-0547">Nucleotide-binding</keyword>
<keyword id="KW-0665">Pyrimidine biosynthesis</keyword>
<dbReference type="EC" id="6.3.4.2" evidence="1"/>
<dbReference type="EMBL" id="AE008923">
    <property type="protein sequence ID" value="AAM36583.1"/>
    <property type="molecule type" value="Genomic_DNA"/>
</dbReference>
<dbReference type="RefSeq" id="WP_003481821.1">
    <property type="nucleotide sequence ID" value="NC_003919.1"/>
</dbReference>
<dbReference type="SMR" id="Q8PLS3"/>
<dbReference type="KEGG" id="xac:XAC1716"/>
<dbReference type="eggNOG" id="COG0504">
    <property type="taxonomic scope" value="Bacteria"/>
</dbReference>
<dbReference type="HOGENOM" id="CLU_011675_5_0_6"/>
<dbReference type="UniPathway" id="UPA00159">
    <property type="reaction ID" value="UER00277"/>
</dbReference>
<dbReference type="Proteomes" id="UP000000576">
    <property type="component" value="Chromosome"/>
</dbReference>
<dbReference type="GO" id="GO:0005829">
    <property type="term" value="C:cytosol"/>
    <property type="evidence" value="ECO:0007669"/>
    <property type="project" value="TreeGrafter"/>
</dbReference>
<dbReference type="GO" id="GO:0005524">
    <property type="term" value="F:ATP binding"/>
    <property type="evidence" value="ECO:0007669"/>
    <property type="project" value="UniProtKB-KW"/>
</dbReference>
<dbReference type="GO" id="GO:0003883">
    <property type="term" value="F:CTP synthase activity"/>
    <property type="evidence" value="ECO:0007669"/>
    <property type="project" value="UniProtKB-UniRule"/>
</dbReference>
<dbReference type="GO" id="GO:0004359">
    <property type="term" value="F:glutaminase activity"/>
    <property type="evidence" value="ECO:0007669"/>
    <property type="project" value="RHEA"/>
</dbReference>
<dbReference type="GO" id="GO:0042802">
    <property type="term" value="F:identical protein binding"/>
    <property type="evidence" value="ECO:0007669"/>
    <property type="project" value="TreeGrafter"/>
</dbReference>
<dbReference type="GO" id="GO:0046872">
    <property type="term" value="F:metal ion binding"/>
    <property type="evidence" value="ECO:0007669"/>
    <property type="project" value="UniProtKB-KW"/>
</dbReference>
<dbReference type="GO" id="GO:0044210">
    <property type="term" value="P:'de novo' CTP biosynthetic process"/>
    <property type="evidence" value="ECO:0007669"/>
    <property type="project" value="UniProtKB-UniRule"/>
</dbReference>
<dbReference type="GO" id="GO:0019856">
    <property type="term" value="P:pyrimidine nucleobase biosynthetic process"/>
    <property type="evidence" value="ECO:0007669"/>
    <property type="project" value="TreeGrafter"/>
</dbReference>
<dbReference type="CDD" id="cd03113">
    <property type="entry name" value="CTPS_N"/>
    <property type="match status" value="1"/>
</dbReference>
<dbReference type="CDD" id="cd01746">
    <property type="entry name" value="GATase1_CTP_Synthase"/>
    <property type="match status" value="1"/>
</dbReference>
<dbReference type="FunFam" id="3.40.50.300:FF:000009">
    <property type="entry name" value="CTP synthase"/>
    <property type="match status" value="1"/>
</dbReference>
<dbReference type="FunFam" id="3.40.50.880:FF:000002">
    <property type="entry name" value="CTP synthase"/>
    <property type="match status" value="1"/>
</dbReference>
<dbReference type="Gene3D" id="3.40.50.880">
    <property type="match status" value="1"/>
</dbReference>
<dbReference type="Gene3D" id="3.40.50.300">
    <property type="entry name" value="P-loop containing nucleotide triphosphate hydrolases"/>
    <property type="match status" value="1"/>
</dbReference>
<dbReference type="HAMAP" id="MF_01227">
    <property type="entry name" value="PyrG"/>
    <property type="match status" value="1"/>
</dbReference>
<dbReference type="InterPro" id="IPR029062">
    <property type="entry name" value="Class_I_gatase-like"/>
</dbReference>
<dbReference type="InterPro" id="IPR004468">
    <property type="entry name" value="CTP_synthase"/>
</dbReference>
<dbReference type="InterPro" id="IPR017456">
    <property type="entry name" value="CTP_synthase_N"/>
</dbReference>
<dbReference type="InterPro" id="IPR017926">
    <property type="entry name" value="GATASE"/>
</dbReference>
<dbReference type="InterPro" id="IPR033828">
    <property type="entry name" value="GATase1_CTP_Synthase"/>
</dbReference>
<dbReference type="InterPro" id="IPR027417">
    <property type="entry name" value="P-loop_NTPase"/>
</dbReference>
<dbReference type="NCBIfam" id="NF003792">
    <property type="entry name" value="PRK05380.1"/>
    <property type="match status" value="1"/>
</dbReference>
<dbReference type="NCBIfam" id="TIGR00337">
    <property type="entry name" value="PyrG"/>
    <property type="match status" value="1"/>
</dbReference>
<dbReference type="PANTHER" id="PTHR11550">
    <property type="entry name" value="CTP SYNTHASE"/>
    <property type="match status" value="1"/>
</dbReference>
<dbReference type="PANTHER" id="PTHR11550:SF0">
    <property type="entry name" value="CTP SYNTHASE-RELATED"/>
    <property type="match status" value="1"/>
</dbReference>
<dbReference type="Pfam" id="PF06418">
    <property type="entry name" value="CTP_synth_N"/>
    <property type="match status" value="1"/>
</dbReference>
<dbReference type="Pfam" id="PF00117">
    <property type="entry name" value="GATase"/>
    <property type="match status" value="1"/>
</dbReference>
<dbReference type="SUPFAM" id="SSF52317">
    <property type="entry name" value="Class I glutamine amidotransferase-like"/>
    <property type="match status" value="1"/>
</dbReference>
<dbReference type="SUPFAM" id="SSF52540">
    <property type="entry name" value="P-loop containing nucleoside triphosphate hydrolases"/>
    <property type="match status" value="1"/>
</dbReference>
<dbReference type="PROSITE" id="PS51273">
    <property type="entry name" value="GATASE_TYPE_1"/>
    <property type="match status" value="1"/>
</dbReference>
<protein>
    <recommendedName>
        <fullName evidence="1">CTP synthase</fullName>
        <ecNumber evidence="1">6.3.4.2</ecNumber>
    </recommendedName>
    <alternativeName>
        <fullName evidence="1">Cytidine 5'-triphosphate synthase</fullName>
    </alternativeName>
    <alternativeName>
        <fullName evidence="1">Cytidine triphosphate synthetase</fullName>
        <shortName evidence="1">CTP synthetase</shortName>
        <shortName evidence="1">CTPS</shortName>
    </alternativeName>
    <alternativeName>
        <fullName evidence="1">UTP--ammonia ligase</fullName>
    </alternativeName>
</protein>
<gene>
    <name evidence="1" type="primary">pyrG</name>
    <name type="ordered locus">XAC1716</name>
</gene>